<gene>
    <name evidence="1" type="primary">grpE</name>
    <name type="ordered locus">spr0454</name>
</gene>
<organism>
    <name type="scientific">Streptococcus pneumoniae (strain ATCC BAA-255 / R6)</name>
    <dbReference type="NCBI Taxonomy" id="171101"/>
    <lineage>
        <taxon>Bacteria</taxon>
        <taxon>Bacillati</taxon>
        <taxon>Bacillota</taxon>
        <taxon>Bacilli</taxon>
        <taxon>Lactobacillales</taxon>
        <taxon>Streptococcaceae</taxon>
        <taxon>Streptococcus</taxon>
    </lineage>
</organism>
<sequence length="174" mass="19969">MAQDIKNEEVEEVQEEEVVETAEETTPEKSELDLANERADEFENKYLRAHAEMQNIQRRANEERQNLQRYRSQDLAKAILPSLDNLERALAVEGLTDDVKKGLAMVQESLIHALKEEGIEEIAADGEFDHNYHMAIQTLPGDDEHPVDTIAQVFQKGYKLHDRILRPAMVVVYN</sequence>
<feature type="chain" id="PRO_0000113872" description="Protein GrpE">
    <location>
        <begin position="1"/>
        <end position="174"/>
    </location>
</feature>
<feature type="region of interest" description="Disordered" evidence="2">
    <location>
        <begin position="1"/>
        <end position="35"/>
    </location>
</feature>
<feature type="compositionally biased region" description="Acidic residues" evidence="2">
    <location>
        <begin position="9"/>
        <end position="25"/>
    </location>
</feature>
<feature type="compositionally biased region" description="Basic and acidic residues" evidence="2">
    <location>
        <begin position="26"/>
        <end position="35"/>
    </location>
</feature>
<reference key="1">
    <citation type="journal article" date="2001" name="J. Bacteriol.">
        <title>Genome of the bacterium Streptococcus pneumoniae strain R6.</title>
        <authorList>
            <person name="Hoskins J."/>
            <person name="Alborn W.E. Jr."/>
            <person name="Arnold J."/>
            <person name="Blaszczak L.C."/>
            <person name="Burgett S."/>
            <person name="DeHoff B.S."/>
            <person name="Estrem S.T."/>
            <person name="Fritz L."/>
            <person name="Fu D.-J."/>
            <person name="Fuller W."/>
            <person name="Geringer C."/>
            <person name="Gilmour R."/>
            <person name="Glass J.S."/>
            <person name="Khoja H."/>
            <person name="Kraft A.R."/>
            <person name="Lagace R.E."/>
            <person name="LeBlanc D.J."/>
            <person name="Lee L.N."/>
            <person name="Lefkowitz E.J."/>
            <person name="Lu J."/>
            <person name="Matsushima P."/>
            <person name="McAhren S.M."/>
            <person name="McHenney M."/>
            <person name="McLeaster K."/>
            <person name="Mundy C.W."/>
            <person name="Nicas T.I."/>
            <person name="Norris F.H."/>
            <person name="O'Gara M."/>
            <person name="Peery R.B."/>
            <person name="Robertson G.T."/>
            <person name="Rockey P."/>
            <person name="Sun P.-M."/>
            <person name="Winkler M.E."/>
            <person name="Yang Y."/>
            <person name="Young-Bellido M."/>
            <person name="Zhao G."/>
            <person name="Zook C.A."/>
            <person name="Baltz R.H."/>
            <person name="Jaskunas S.R."/>
            <person name="Rosteck P.R. Jr."/>
            <person name="Skatrud P.L."/>
            <person name="Glass J.I."/>
        </authorList>
    </citation>
    <scope>NUCLEOTIDE SEQUENCE [LARGE SCALE GENOMIC DNA]</scope>
    <source>
        <strain>ATCC BAA-255 / R6</strain>
    </source>
</reference>
<proteinExistence type="inferred from homology"/>
<protein>
    <recommendedName>
        <fullName evidence="1">Protein GrpE</fullName>
    </recommendedName>
    <alternativeName>
        <fullName evidence="1">HSP-70 cofactor</fullName>
    </alternativeName>
</protein>
<accession>Q8CWT4</accession>
<name>GRPE_STRR6</name>
<dbReference type="EMBL" id="AE007317">
    <property type="protein sequence ID" value="AAK99258.1"/>
    <property type="status" value="ALT_INIT"/>
    <property type="molecule type" value="Genomic_DNA"/>
</dbReference>
<dbReference type="PIR" id="F97928">
    <property type="entry name" value="F97928"/>
</dbReference>
<dbReference type="RefSeq" id="NP_358048.1">
    <property type="nucleotide sequence ID" value="NC_003098.1"/>
</dbReference>
<dbReference type="RefSeq" id="WP_000046028.1">
    <property type="nucleotide sequence ID" value="NC_003098.1"/>
</dbReference>
<dbReference type="SMR" id="Q8CWT4"/>
<dbReference type="STRING" id="171101.spr0454"/>
<dbReference type="KEGG" id="spr:spr0454"/>
<dbReference type="PATRIC" id="fig|171101.6.peg.501"/>
<dbReference type="eggNOG" id="COG0576">
    <property type="taxonomic scope" value="Bacteria"/>
</dbReference>
<dbReference type="HOGENOM" id="CLU_057217_6_3_9"/>
<dbReference type="Proteomes" id="UP000000586">
    <property type="component" value="Chromosome"/>
</dbReference>
<dbReference type="GO" id="GO:0005737">
    <property type="term" value="C:cytoplasm"/>
    <property type="evidence" value="ECO:0007669"/>
    <property type="project" value="UniProtKB-SubCell"/>
</dbReference>
<dbReference type="GO" id="GO:0000774">
    <property type="term" value="F:adenyl-nucleotide exchange factor activity"/>
    <property type="evidence" value="ECO:0000318"/>
    <property type="project" value="GO_Central"/>
</dbReference>
<dbReference type="GO" id="GO:0042803">
    <property type="term" value="F:protein homodimerization activity"/>
    <property type="evidence" value="ECO:0007669"/>
    <property type="project" value="InterPro"/>
</dbReference>
<dbReference type="GO" id="GO:0051087">
    <property type="term" value="F:protein-folding chaperone binding"/>
    <property type="evidence" value="ECO:0007669"/>
    <property type="project" value="InterPro"/>
</dbReference>
<dbReference type="GO" id="GO:0051082">
    <property type="term" value="F:unfolded protein binding"/>
    <property type="evidence" value="ECO:0000318"/>
    <property type="project" value="GO_Central"/>
</dbReference>
<dbReference type="GO" id="GO:0006457">
    <property type="term" value="P:protein folding"/>
    <property type="evidence" value="ECO:0007669"/>
    <property type="project" value="InterPro"/>
</dbReference>
<dbReference type="CDD" id="cd00446">
    <property type="entry name" value="GrpE"/>
    <property type="match status" value="1"/>
</dbReference>
<dbReference type="FunFam" id="2.30.22.10:FF:000004">
    <property type="entry name" value="Protein GrpE"/>
    <property type="match status" value="1"/>
</dbReference>
<dbReference type="FunFam" id="3.90.20.20:FF:000007">
    <property type="entry name" value="Protein GrpE"/>
    <property type="match status" value="1"/>
</dbReference>
<dbReference type="Gene3D" id="3.90.20.20">
    <property type="match status" value="1"/>
</dbReference>
<dbReference type="Gene3D" id="2.30.22.10">
    <property type="entry name" value="Head domain of nucleotide exchange factor GrpE"/>
    <property type="match status" value="1"/>
</dbReference>
<dbReference type="HAMAP" id="MF_01151">
    <property type="entry name" value="GrpE"/>
    <property type="match status" value="1"/>
</dbReference>
<dbReference type="InterPro" id="IPR000740">
    <property type="entry name" value="GrpE"/>
</dbReference>
<dbReference type="InterPro" id="IPR013805">
    <property type="entry name" value="GrpE_coiled_coil"/>
</dbReference>
<dbReference type="InterPro" id="IPR009012">
    <property type="entry name" value="GrpE_head"/>
</dbReference>
<dbReference type="NCBIfam" id="NF010738">
    <property type="entry name" value="PRK14140.1"/>
    <property type="match status" value="1"/>
</dbReference>
<dbReference type="NCBIfam" id="NF010753">
    <property type="entry name" value="PRK14156.1"/>
    <property type="match status" value="1"/>
</dbReference>
<dbReference type="PANTHER" id="PTHR21237">
    <property type="entry name" value="GRPE PROTEIN"/>
    <property type="match status" value="1"/>
</dbReference>
<dbReference type="PANTHER" id="PTHR21237:SF23">
    <property type="entry name" value="GRPE PROTEIN HOMOLOG, MITOCHONDRIAL"/>
    <property type="match status" value="1"/>
</dbReference>
<dbReference type="Pfam" id="PF01025">
    <property type="entry name" value="GrpE"/>
    <property type="match status" value="1"/>
</dbReference>
<dbReference type="PRINTS" id="PR00773">
    <property type="entry name" value="GRPEPROTEIN"/>
</dbReference>
<dbReference type="SUPFAM" id="SSF58014">
    <property type="entry name" value="Coiled-coil domain of nucleotide exchange factor GrpE"/>
    <property type="match status" value="1"/>
</dbReference>
<dbReference type="SUPFAM" id="SSF51064">
    <property type="entry name" value="Head domain of nucleotide exchange factor GrpE"/>
    <property type="match status" value="1"/>
</dbReference>
<dbReference type="PROSITE" id="PS01071">
    <property type="entry name" value="GRPE"/>
    <property type="match status" value="1"/>
</dbReference>
<evidence type="ECO:0000255" key="1">
    <source>
        <dbReference type="HAMAP-Rule" id="MF_01151"/>
    </source>
</evidence>
<evidence type="ECO:0000256" key="2">
    <source>
        <dbReference type="SAM" id="MobiDB-lite"/>
    </source>
</evidence>
<evidence type="ECO:0000305" key="3"/>
<comment type="function">
    <text evidence="1">Participates actively in the response to hyperosmotic and heat shock by preventing the aggregation of stress-denatured proteins, in association with DnaK and GrpE. It is the nucleotide exchange factor for DnaK and may function as a thermosensor. Unfolded proteins bind initially to DnaJ; upon interaction with the DnaJ-bound protein, DnaK hydrolyzes its bound ATP, resulting in the formation of a stable complex. GrpE releases ADP from DnaK; ATP binding to DnaK triggers the release of the substrate protein, thus completing the reaction cycle. Several rounds of ATP-dependent interactions between DnaJ, DnaK and GrpE are required for fully efficient folding.</text>
</comment>
<comment type="subunit">
    <text evidence="1">Homodimer.</text>
</comment>
<comment type="subcellular location">
    <subcellularLocation>
        <location evidence="1">Cytoplasm</location>
    </subcellularLocation>
</comment>
<comment type="similarity">
    <text evidence="1">Belongs to the GrpE family.</text>
</comment>
<comment type="sequence caution" evidence="3">
    <conflict type="erroneous initiation">
        <sequence resource="EMBL-CDS" id="AAK99258"/>
    </conflict>
</comment>
<keyword id="KW-0143">Chaperone</keyword>
<keyword id="KW-0963">Cytoplasm</keyword>
<keyword id="KW-1185">Reference proteome</keyword>
<keyword id="KW-0346">Stress response</keyword>